<protein>
    <recommendedName>
        <fullName evidence="1">Hydrogenase maturation factor HypA</fullName>
    </recommendedName>
</protein>
<proteinExistence type="inferred from homology"/>
<comment type="function">
    <text evidence="1">Involved in the maturation of [NiFe] hydrogenases. Required for nickel insertion into the metal center of the hydrogenase.</text>
</comment>
<comment type="similarity">
    <text evidence="1">Belongs to the HypA/HybF family.</text>
</comment>
<name>HYPA_POLNA</name>
<evidence type="ECO:0000255" key="1">
    <source>
        <dbReference type="HAMAP-Rule" id="MF_00213"/>
    </source>
</evidence>
<organism>
    <name type="scientific">Polaromonas naphthalenivorans (strain CJ2)</name>
    <dbReference type="NCBI Taxonomy" id="365044"/>
    <lineage>
        <taxon>Bacteria</taxon>
        <taxon>Pseudomonadati</taxon>
        <taxon>Pseudomonadota</taxon>
        <taxon>Betaproteobacteria</taxon>
        <taxon>Burkholderiales</taxon>
        <taxon>Comamonadaceae</taxon>
        <taxon>Polaromonas</taxon>
    </lineage>
</organism>
<keyword id="KW-0479">Metal-binding</keyword>
<keyword id="KW-0533">Nickel</keyword>
<keyword id="KW-1185">Reference proteome</keyword>
<keyword id="KW-0862">Zinc</keyword>
<reference key="1">
    <citation type="journal article" date="2009" name="Environ. Microbiol.">
        <title>The genome of Polaromonas naphthalenivorans strain CJ2, isolated from coal tar-contaminated sediment, reveals physiological and metabolic versatility and evolution through extensive horizontal gene transfer.</title>
        <authorList>
            <person name="Yagi J.M."/>
            <person name="Sims D."/>
            <person name="Brettin T."/>
            <person name="Bruce D."/>
            <person name="Madsen E.L."/>
        </authorList>
    </citation>
    <scope>NUCLEOTIDE SEQUENCE [LARGE SCALE GENOMIC DNA]</scope>
    <source>
        <strain>CJ2</strain>
    </source>
</reference>
<feature type="chain" id="PRO_1000023849" description="Hydrogenase maturation factor HypA">
    <location>
        <begin position="1"/>
        <end position="115"/>
    </location>
</feature>
<feature type="binding site" evidence="1">
    <location>
        <position position="2"/>
    </location>
    <ligand>
        <name>Ni(2+)</name>
        <dbReference type="ChEBI" id="CHEBI:49786"/>
    </ligand>
</feature>
<feature type="binding site" evidence="1">
    <location>
        <position position="73"/>
    </location>
    <ligand>
        <name>Zn(2+)</name>
        <dbReference type="ChEBI" id="CHEBI:29105"/>
    </ligand>
</feature>
<feature type="binding site" evidence="1">
    <location>
        <position position="76"/>
    </location>
    <ligand>
        <name>Zn(2+)</name>
        <dbReference type="ChEBI" id="CHEBI:29105"/>
    </ligand>
</feature>
<feature type="binding site" evidence="1">
    <location>
        <position position="89"/>
    </location>
    <ligand>
        <name>Zn(2+)</name>
        <dbReference type="ChEBI" id="CHEBI:29105"/>
    </ligand>
</feature>
<feature type="binding site" evidence="1">
    <location>
        <position position="92"/>
    </location>
    <ligand>
        <name>Zn(2+)</name>
        <dbReference type="ChEBI" id="CHEBI:29105"/>
    </ligand>
</feature>
<gene>
    <name evidence="1" type="primary">hypA</name>
    <name type="ordered locus">Pnap_1964</name>
</gene>
<accession>A1VNP5</accession>
<sequence length="115" mass="12178">MHEASLAGGILKLVEDAARREAFQRVTVLRLEVGQLAGVELRALKFALEAIAPGTALDGARLEFEEPAGQAWCMACSQTVPLAARGMACTGCGSYQLQPTGGTELRVMDMLVADE</sequence>
<dbReference type="EMBL" id="CP000529">
    <property type="protein sequence ID" value="ABM37273.1"/>
    <property type="molecule type" value="Genomic_DNA"/>
</dbReference>
<dbReference type="RefSeq" id="WP_011801354.1">
    <property type="nucleotide sequence ID" value="NC_008781.1"/>
</dbReference>
<dbReference type="SMR" id="A1VNP5"/>
<dbReference type="STRING" id="365044.Pnap_1964"/>
<dbReference type="KEGG" id="pna:Pnap_1964"/>
<dbReference type="eggNOG" id="COG0375">
    <property type="taxonomic scope" value="Bacteria"/>
</dbReference>
<dbReference type="HOGENOM" id="CLU_126929_0_0_4"/>
<dbReference type="OrthoDB" id="288014at2"/>
<dbReference type="Proteomes" id="UP000000644">
    <property type="component" value="Chromosome"/>
</dbReference>
<dbReference type="GO" id="GO:0016151">
    <property type="term" value="F:nickel cation binding"/>
    <property type="evidence" value="ECO:0007669"/>
    <property type="project" value="UniProtKB-UniRule"/>
</dbReference>
<dbReference type="GO" id="GO:0008270">
    <property type="term" value="F:zinc ion binding"/>
    <property type="evidence" value="ECO:0007669"/>
    <property type="project" value="UniProtKB-UniRule"/>
</dbReference>
<dbReference type="GO" id="GO:0051604">
    <property type="term" value="P:protein maturation"/>
    <property type="evidence" value="ECO:0007669"/>
    <property type="project" value="InterPro"/>
</dbReference>
<dbReference type="GO" id="GO:0036211">
    <property type="term" value="P:protein modification process"/>
    <property type="evidence" value="ECO:0007669"/>
    <property type="project" value="UniProtKB-UniRule"/>
</dbReference>
<dbReference type="Gene3D" id="3.30.2320.80">
    <property type="match status" value="1"/>
</dbReference>
<dbReference type="HAMAP" id="MF_00213">
    <property type="entry name" value="HypA_HybF"/>
    <property type="match status" value="1"/>
</dbReference>
<dbReference type="InterPro" id="IPR020538">
    <property type="entry name" value="Hydgase_Ni_incorp_HypA/HybF_CS"/>
</dbReference>
<dbReference type="InterPro" id="IPR000688">
    <property type="entry name" value="HypA/HybF"/>
</dbReference>
<dbReference type="PANTHER" id="PTHR34535">
    <property type="entry name" value="HYDROGENASE MATURATION FACTOR HYPA"/>
    <property type="match status" value="1"/>
</dbReference>
<dbReference type="PANTHER" id="PTHR34535:SF3">
    <property type="entry name" value="HYDROGENASE MATURATION FACTOR HYPA"/>
    <property type="match status" value="1"/>
</dbReference>
<dbReference type="Pfam" id="PF01155">
    <property type="entry name" value="HypA"/>
    <property type="match status" value="1"/>
</dbReference>
<dbReference type="PIRSF" id="PIRSF004761">
    <property type="entry name" value="Hydrgn_mat_HypA"/>
    <property type="match status" value="1"/>
</dbReference>
<dbReference type="PROSITE" id="PS01249">
    <property type="entry name" value="HYPA"/>
    <property type="match status" value="1"/>
</dbReference>